<comment type="function">
    <text evidence="1">Binds to actin and affects the structure of the cytoskeleton. At high concentrations, profilin prevents the polymerization of actin, whereas it enhances it at low concentrations (By similarity).</text>
</comment>
<comment type="subunit">
    <text evidence="1">Occurs in many kinds of cells as a complex with monomeric actin in a 1:1 ratio.</text>
</comment>
<comment type="subcellular location">
    <subcellularLocation>
        <location evidence="1">Cytoplasm</location>
        <location evidence="1">Cytoskeleton</location>
    </subcellularLocation>
</comment>
<comment type="PTM">
    <text evidence="1">Phosphorylated by MAP kinases.</text>
</comment>
<comment type="polymorphism">
    <text>Several isoforms of the allergen exist due to polymorphism.</text>
</comment>
<comment type="allergen">
    <text>Causes an allergic reaction in human.</text>
</comment>
<comment type="miscellaneous">
    <text evidence="3">The variability of the residues taking part of IgE-binding epitopes might be responsible of the difference in cross-reactivity among olive pollen cultivars, and between distantly related pollen species, leading to a variable range of allergy reactions among atopic patients.</text>
</comment>
<comment type="similarity">
    <text evidence="2">Belongs to the profilin family.</text>
</comment>
<sequence length="133" mass="14161">MSWQAYVDEHLMCDIDGQGQQLAASAIVGHDGSVWAQSSSFPQLKPEEITGIMKDFDEPGHLAPTGLHLGGTKYMVIQGEAGAVIRGKKGSGGITIKKTGQALVFGIYEEPVTPGQCNMVVERLGDYLAEQGL</sequence>
<proteinExistence type="evidence at protein level"/>
<feature type="initiator methionine" description="Removed" evidence="1">
    <location>
        <position position="1"/>
    </location>
</feature>
<feature type="chain" id="PRO_0000424964" description="Profilin-2">
    <location>
        <begin position="2"/>
        <end position="133"/>
    </location>
</feature>
<feature type="short sequence motif" description="Involved in PIP2 interaction">
    <location>
        <begin position="83"/>
        <end position="99"/>
    </location>
</feature>
<feature type="modified residue" description="Phosphothreonine" evidence="1">
    <location>
        <position position="113"/>
    </location>
</feature>
<feature type="disulfide bond" evidence="3">
    <location>
        <begin position="13"/>
        <end position="117"/>
    </location>
</feature>
<organism>
    <name type="scientific">Corylus avellana</name>
    <name type="common">European hazel</name>
    <name type="synonym">Corylus maxima</name>
    <dbReference type="NCBI Taxonomy" id="13451"/>
    <lineage>
        <taxon>Eukaryota</taxon>
        <taxon>Viridiplantae</taxon>
        <taxon>Streptophyta</taxon>
        <taxon>Embryophyta</taxon>
        <taxon>Tracheophyta</taxon>
        <taxon>Spermatophyta</taxon>
        <taxon>Magnoliopsida</taxon>
        <taxon>eudicotyledons</taxon>
        <taxon>Gunneridae</taxon>
        <taxon>Pentapetalae</taxon>
        <taxon>rosids</taxon>
        <taxon>fabids</taxon>
        <taxon>Fagales</taxon>
        <taxon>Betulaceae</taxon>
        <taxon>Corylus</taxon>
    </lineage>
</organism>
<keyword id="KW-0009">Actin-binding</keyword>
<keyword id="KW-0020">Allergen</keyword>
<keyword id="KW-0963">Cytoplasm</keyword>
<keyword id="KW-0206">Cytoskeleton</keyword>
<keyword id="KW-1015">Disulfide bond</keyword>
<keyword id="KW-0597">Phosphoprotein</keyword>
<name>PROF2_CORAV</name>
<evidence type="ECO:0000250" key="1"/>
<evidence type="ECO:0000305" key="2"/>
<evidence type="ECO:0000305" key="3">
    <source>
    </source>
</evidence>
<reference key="1">
    <citation type="journal article" date="2012" name="PLoS ONE">
        <title>Characterization of profilin polymorphism in pollen with a focus on multifunctionality.</title>
        <authorList>
            <person name="Jimenez-Lopez J.C."/>
            <person name="Morales S."/>
            <person name="Castro A.J."/>
            <person name="Volkmann D."/>
            <person name="Rodriguez-Garcia M.I."/>
            <person name="Alche Jde D."/>
        </authorList>
    </citation>
    <scope>NUCLEOTIDE SEQUENCE [MRNA]</scope>
    <scope>POLYMORPHISM</scope>
    <source>
        <strain>cv. Avellana</strain>
    </source>
</reference>
<reference key="2">
    <citation type="journal article" date="2013" name="PLoS ONE">
        <title>Analysis of the effects of polymorphism on pollen profilin structural functionality and the generation of conformational, T- and B-cell epitopes.</title>
        <authorList>
            <person name="Jimenez-Lopez J.C."/>
            <person name="Rodriguez-Garcia M.I."/>
            <person name="Alche J.D."/>
        </authorList>
    </citation>
    <scope>3D-STRUCTURE MODELING</scope>
    <scope>DISULFIDE BOND</scope>
</reference>
<accession>A4KA40</accession>
<protein>
    <recommendedName>
        <fullName>Profilin-2</fullName>
    </recommendedName>
    <alternativeName>
        <fullName>Allergen Cor a 2</fullName>
    </alternativeName>
    <alternativeName>
        <fullName>Pollen allergen Cor a 2</fullName>
    </alternativeName>
    <allergenName>Cor a 2</allergenName>
</protein>
<dbReference type="EMBL" id="DQ663544">
    <property type="protein sequence ID" value="ABG81297.1"/>
    <property type="molecule type" value="mRNA"/>
</dbReference>
<dbReference type="SMR" id="A4KA40"/>
<dbReference type="Allergome" id="244">
    <property type="allergen name" value="Cor a 2"/>
</dbReference>
<dbReference type="GO" id="GO:0005938">
    <property type="term" value="C:cell cortex"/>
    <property type="evidence" value="ECO:0007669"/>
    <property type="project" value="TreeGrafter"/>
</dbReference>
<dbReference type="GO" id="GO:0005856">
    <property type="term" value="C:cytoskeleton"/>
    <property type="evidence" value="ECO:0007669"/>
    <property type="project" value="UniProtKB-SubCell"/>
</dbReference>
<dbReference type="GO" id="GO:0003785">
    <property type="term" value="F:actin monomer binding"/>
    <property type="evidence" value="ECO:0007669"/>
    <property type="project" value="TreeGrafter"/>
</dbReference>
<dbReference type="CDD" id="cd00148">
    <property type="entry name" value="PROF"/>
    <property type="match status" value="1"/>
</dbReference>
<dbReference type="FunFam" id="3.30.450.30:FF:000001">
    <property type="entry name" value="Profilin"/>
    <property type="match status" value="1"/>
</dbReference>
<dbReference type="Gene3D" id="3.30.450.30">
    <property type="entry name" value="Dynein light chain 2a, cytoplasmic"/>
    <property type="match status" value="1"/>
</dbReference>
<dbReference type="InterPro" id="IPR048278">
    <property type="entry name" value="PFN"/>
</dbReference>
<dbReference type="InterPro" id="IPR005455">
    <property type="entry name" value="PFN_euk"/>
</dbReference>
<dbReference type="InterPro" id="IPR036140">
    <property type="entry name" value="PFN_sf"/>
</dbReference>
<dbReference type="InterPro" id="IPR027310">
    <property type="entry name" value="Profilin_CS"/>
</dbReference>
<dbReference type="PANTHER" id="PTHR11604">
    <property type="entry name" value="PROFILIN"/>
    <property type="match status" value="1"/>
</dbReference>
<dbReference type="PANTHER" id="PTHR11604:SF25">
    <property type="entry name" value="PROFILIN-5"/>
    <property type="match status" value="1"/>
</dbReference>
<dbReference type="Pfam" id="PF00235">
    <property type="entry name" value="Profilin"/>
    <property type="match status" value="1"/>
</dbReference>
<dbReference type="PRINTS" id="PR00392">
    <property type="entry name" value="PROFILIN"/>
</dbReference>
<dbReference type="PRINTS" id="PR01640">
    <property type="entry name" value="PROFILINPLNT"/>
</dbReference>
<dbReference type="SMART" id="SM00392">
    <property type="entry name" value="PROF"/>
    <property type="match status" value="1"/>
</dbReference>
<dbReference type="SUPFAM" id="SSF55770">
    <property type="entry name" value="Profilin (actin-binding protein)"/>
    <property type="match status" value="1"/>
</dbReference>
<dbReference type="PROSITE" id="PS00414">
    <property type="entry name" value="PROFILIN"/>
    <property type="match status" value="1"/>
</dbReference>